<proteinExistence type="inferred from homology"/>
<keyword id="KW-0489">Methyltransferase</keyword>
<keyword id="KW-0694">RNA-binding</keyword>
<keyword id="KW-0698">rRNA processing</keyword>
<keyword id="KW-0808">Transferase</keyword>
<keyword id="KW-0819">tRNA processing</keyword>
<comment type="function">
    <text evidence="1">Involved in pre-rRNA and tRNA processing. Utilizes the methyl donor S-adenosyl-L-methionine to catalyze the site-specific 2'-hydroxyl methylation of ribose moieties in rRNA and tRNA. Site specificity is provided by a guide RNA that base pairs with the substrate. Methylation occurs at a characteristic distance from the sequence involved in base pairing with the guide RNA.</text>
</comment>
<comment type="subunit">
    <text evidence="1">Interacts with nop5. Component of box C/D small ribonucleoprotein (sRNP) particles that contain rpl7ae, FlpA and nop5, plus a guide RNA.</text>
</comment>
<comment type="similarity">
    <text evidence="1">Belongs to the methyltransferase superfamily. Fibrillarin family.</text>
</comment>
<name>FLPA_METM7</name>
<sequence>MEKIKVKEIFNNVYSVDFGDGLKRIATKSLVPGKRVYGEKLVYSDSIEYRVWNPNKSKLGAAIINGLKKMPIKKGTKVLYLGASAGTTPSHVADIAENSLVYALEFAPRIMREFIDSCNERKNLIPVLGDANRPQDYSNIVEKVDVIFEDVAQPNQAEILVKNARWFLKENGYAMISIKARSVDVTKNPREIFAEQKKILIEGGFEIVDEINIEPFEKDHMMMVGIWNETKY</sequence>
<accession>A6VJQ1</accession>
<gene>
    <name evidence="1" type="primary">flpA</name>
    <name type="ordered locus">MmarC7_1619</name>
</gene>
<protein>
    <recommendedName>
        <fullName evidence="1">Fibrillarin-like rRNA/tRNA 2'-O-methyltransferase</fullName>
        <ecNumber evidence="1">2.1.1.-</ecNumber>
    </recommendedName>
</protein>
<organism>
    <name type="scientific">Methanococcus maripaludis (strain C7 / ATCC BAA-1331)</name>
    <dbReference type="NCBI Taxonomy" id="426368"/>
    <lineage>
        <taxon>Archaea</taxon>
        <taxon>Methanobacteriati</taxon>
        <taxon>Methanobacteriota</taxon>
        <taxon>Methanomada group</taxon>
        <taxon>Methanococci</taxon>
        <taxon>Methanococcales</taxon>
        <taxon>Methanococcaceae</taxon>
        <taxon>Methanococcus</taxon>
    </lineage>
</organism>
<dbReference type="EC" id="2.1.1.-" evidence="1"/>
<dbReference type="EMBL" id="CP000745">
    <property type="protein sequence ID" value="ABR66677.1"/>
    <property type="molecule type" value="Genomic_DNA"/>
</dbReference>
<dbReference type="SMR" id="A6VJQ1"/>
<dbReference type="STRING" id="426368.MmarC7_1619"/>
<dbReference type="KEGG" id="mmz:MmarC7_1619"/>
<dbReference type="eggNOG" id="arCOG00078">
    <property type="taxonomic scope" value="Archaea"/>
</dbReference>
<dbReference type="HOGENOM" id="CLU_059055_2_0_2"/>
<dbReference type="OrthoDB" id="6244at2157"/>
<dbReference type="GO" id="GO:1990259">
    <property type="term" value="F:histone H2AQ104 methyltransferase activity"/>
    <property type="evidence" value="ECO:0007669"/>
    <property type="project" value="TreeGrafter"/>
</dbReference>
<dbReference type="GO" id="GO:0003723">
    <property type="term" value="F:RNA binding"/>
    <property type="evidence" value="ECO:0007669"/>
    <property type="project" value="UniProtKB-UniRule"/>
</dbReference>
<dbReference type="GO" id="GO:0008649">
    <property type="term" value="F:rRNA methyltransferase activity"/>
    <property type="evidence" value="ECO:0007669"/>
    <property type="project" value="TreeGrafter"/>
</dbReference>
<dbReference type="GO" id="GO:0000494">
    <property type="term" value="P:box C/D sno(s)RNA 3'-end processing"/>
    <property type="evidence" value="ECO:0007669"/>
    <property type="project" value="TreeGrafter"/>
</dbReference>
<dbReference type="GO" id="GO:0008033">
    <property type="term" value="P:tRNA processing"/>
    <property type="evidence" value="ECO:0007669"/>
    <property type="project" value="UniProtKB-UniRule"/>
</dbReference>
<dbReference type="CDD" id="cd02440">
    <property type="entry name" value="AdoMet_MTases"/>
    <property type="match status" value="1"/>
</dbReference>
<dbReference type="FunFam" id="3.30.200.20:FF:000613">
    <property type="entry name" value="Fibrillarin-like rRNA/tRNA 2'-O-methyltransferase"/>
    <property type="match status" value="1"/>
</dbReference>
<dbReference type="Gene3D" id="3.30.200.20">
    <property type="entry name" value="Phosphorylase Kinase, domain 1"/>
    <property type="match status" value="1"/>
</dbReference>
<dbReference type="Gene3D" id="3.40.50.150">
    <property type="entry name" value="Vaccinia Virus protein VP39"/>
    <property type="match status" value="1"/>
</dbReference>
<dbReference type="HAMAP" id="MF_00351">
    <property type="entry name" value="RNA_methyltransf_FlpA"/>
    <property type="match status" value="1"/>
</dbReference>
<dbReference type="InterPro" id="IPR000692">
    <property type="entry name" value="Fibrillarin"/>
</dbReference>
<dbReference type="InterPro" id="IPR020813">
    <property type="entry name" value="Fibrillarin_CS"/>
</dbReference>
<dbReference type="InterPro" id="IPR029063">
    <property type="entry name" value="SAM-dependent_MTases_sf"/>
</dbReference>
<dbReference type="NCBIfam" id="NF003276">
    <property type="entry name" value="PRK04266.1-2"/>
    <property type="match status" value="1"/>
</dbReference>
<dbReference type="NCBIfam" id="NF003277">
    <property type="entry name" value="PRK04266.1-3"/>
    <property type="match status" value="1"/>
</dbReference>
<dbReference type="NCBIfam" id="NF003279">
    <property type="entry name" value="PRK04266.1-5"/>
    <property type="match status" value="1"/>
</dbReference>
<dbReference type="PANTHER" id="PTHR10335:SF17">
    <property type="entry name" value="FIBRILLARIN"/>
    <property type="match status" value="1"/>
</dbReference>
<dbReference type="PANTHER" id="PTHR10335">
    <property type="entry name" value="RRNA 2-O-METHYLTRANSFERASE FIBRILLARIN"/>
    <property type="match status" value="1"/>
</dbReference>
<dbReference type="Pfam" id="PF01269">
    <property type="entry name" value="Fibrillarin"/>
    <property type="match status" value="1"/>
</dbReference>
<dbReference type="PIRSF" id="PIRSF006540">
    <property type="entry name" value="Nop17p"/>
    <property type="match status" value="1"/>
</dbReference>
<dbReference type="PRINTS" id="PR00052">
    <property type="entry name" value="FIBRILLARIN"/>
</dbReference>
<dbReference type="SMART" id="SM01206">
    <property type="entry name" value="Fibrillarin"/>
    <property type="match status" value="1"/>
</dbReference>
<dbReference type="SUPFAM" id="SSF53335">
    <property type="entry name" value="S-adenosyl-L-methionine-dependent methyltransferases"/>
    <property type="match status" value="1"/>
</dbReference>
<dbReference type="PROSITE" id="PS00566">
    <property type="entry name" value="FIBRILLARIN"/>
    <property type="match status" value="1"/>
</dbReference>
<feature type="chain" id="PRO_1000006940" description="Fibrillarin-like rRNA/tRNA 2'-O-methyltransferase">
    <location>
        <begin position="1"/>
        <end position="232"/>
    </location>
</feature>
<feature type="binding site" evidence="1">
    <location>
        <begin position="87"/>
        <end position="88"/>
    </location>
    <ligand>
        <name>S-adenosyl-L-methionine</name>
        <dbReference type="ChEBI" id="CHEBI:59789"/>
    </ligand>
</feature>
<feature type="binding site" evidence="1">
    <location>
        <begin position="105"/>
        <end position="106"/>
    </location>
    <ligand>
        <name>S-adenosyl-L-methionine</name>
        <dbReference type="ChEBI" id="CHEBI:59789"/>
    </ligand>
</feature>
<feature type="binding site" evidence="1">
    <location>
        <begin position="130"/>
        <end position="131"/>
    </location>
    <ligand>
        <name>S-adenosyl-L-methionine</name>
        <dbReference type="ChEBI" id="CHEBI:59789"/>
    </ligand>
</feature>
<feature type="binding site" evidence="1">
    <location>
        <begin position="150"/>
        <end position="153"/>
    </location>
    <ligand>
        <name>S-adenosyl-L-methionine</name>
        <dbReference type="ChEBI" id="CHEBI:59789"/>
    </ligand>
</feature>
<evidence type="ECO:0000255" key="1">
    <source>
        <dbReference type="HAMAP-Rule" id="MF_00351"/>
    </source>
</evidence>
<reference key="1">
    <citation type="submission" date="2007-06" db="EMBL/GenBank/DDBJ databases">
        <title>Complete sequence of Methanococcus maripaludis C7.</title>
        <authorList>
            <consortium name="US DOE Joint Genome Institute"/>
            <person name="Copeland A."/>
            <person name="Lucas S."/>
            <person name="Lapidus A."/>
            <person name="Barry K."/>
            <person name="Glavina del Rio T."/>
            <person name="Dalin E."/>
            <person name="Tice H."/>
            <person name="Pitluck S."/>
            <person name="Clum A."/>
            <person name="Schmutz J."/>
            <person name="Larimer F."/>
            <person name="Land M."/>
            <person name="Hauser L."/>
            <person name="Kyrpides N."/>
            <person name="Anderson I."/>
            <person name="Sieprawska-Lupa M."/>
            <person name="Whitman W.B."/>
            <person name="Richardson P."/>
        </authorList>
    </citation>
    <scope>NUCLEOTIDE SEQUENCE [LARGE SCALE GENOMIC DNA]</scope>
    <source>
        <strain>C7 / ATCC BAA-1331</strain>
    </source>
</reference>